<reference key="1">
    <citation type="submission" date="2006-06" db="EMBL/GenBank/DDBJ databases">
        <title>Complete sequence of chromosome of Mycobacterium sp. MCS.</title>
        <authorList>
            <consortium name="US DOE Joint Genome Institute"/>
            <person name="Copeland A."/>
            <person name="Lucas S."/>
            <person name="Lapidus A."/>
            <person name="Barry K."/>
            <person name="Detter J.C."/>
            <person name="Glavina del Rio T."/>
            <person name="Hammon N."/>
            <person name="Israni S."/>
            <person name="Dalin E."/>
            <person name="Tice H."/>
            <person name="Pitluck S."/>
            <person name="Martinez M."/>
            <person name="Schmutz J."/>
            <person name="Larimer F."/>
            <person name="Land M."/>
            <person name="Hauser L."/>
            <person name="Kyrpides N."/>
            <person name="Kim E."/>
            <person name="Miller C.D."/>
            <person name="Hughes J.E."/>
            <person name="Anderson A.J."/>
            <person name="Sims R.C."/>
            <person name="Richardson P."/>
        </authorList>
    </citation>
    <scope>NUCLEOTIDE SEQUENCE [LARGE SCALE GENOMIC DNA]</scope>
    <source>
        <strain>MCS</strain>
    </source>
</reference>
<name>LEXA_MYCSS</name>
<gene>
    <name evidence="1" type="primary">lexA</name>
    <name type="ordered locus">Mmcs_2168</name>
</gene>
<comment type="function">
    <text evidence="1">Represses a number of genes involved in the response to DNA damage (SOS response), including recA and lexA. In the presence of single-stranded DNA, RecA interacts with LexA causing an autocatalytic cleavage which disrupts the DNA-binding part of LexA, leading to derepression of the SOS regulon and eventually DNA repair.</text>
</comment>
<comment type="catalytic activity">
    <reaction evidence="1">
        <text>Hydrolysis of Ala-|-Gly bond in repressor LexA.</text>
        <dbReference type="EC" id="3.4.21.88"/>
    </reaction>
</comment>
<comment type="subunit">
    <text evidence="1">Homodimer.</text>
</comment>
<comment type="similarity">
    <text evidence="1">Belongs to the peptidase S24 family.</text>
</comment>
<keyword id="KW-0068">Autocatalytic cleavage</keyword>
<keyword id="KW-0227">DNA damage</keyword>
<keyword id="KW-0234">DNA repair</keyword>
<keyword id="KW-0235">DNA replication</keyword>
<keyword id="KW-0238">DNA-binding</keyword>
<keyword id="KW-0378">Hydrolase</keyword>
<keyword id="KW-0678">Repressor</keyword>
<keyword id="KW-0742">SOS response</keyword>
<keyword id="KW-0804">Transcription</keyword>
<keyword id="KW-0805">Transcription regulation</keyword>
<dbReference type="EC" id="3.4.21.88" evidence="1"/>
<dbReference type="EMBL" id="CP000384">
    <property type="protein sequence ID" value="ABG08276.1"/>
    <property type="molecule type" value="Genomic_DNA"/>
</dbReference>
<dbReference type="SMR" id="Q1BA08"/>
<dbReference type="MEROPS" id="S24.001"/>
<dbReference type="KEGG" id="mmc:Mmcs_2168"/>
<dbReference type="HOGENOM" id="CLU_066192_45_0_11"/>
<dbReference type="BioCyc" id="MSP164756:G1G6O-2215-MONOMER"/>
<dbReference type="GO" id="GO:0003677">
    <property type="term" value="F:DNA binding"/>
    <property type="evidence" value="ECO:0007669"/>
    <property type="project" value="UniProtKB-UniRule"/>
</dbReference>
<dbReference type="GO" id="GO:0004252">
    <property type="term" value="F:serine-type endopeptidase activity"/>
    <property type="evidence" value="ECO:0007669"/>
    <property type="project" value="UniProtKB-UniRule"/>
</dbReference>
<dbReference type="GO" id="GO:0006281">
    <property type="term" value="P:DNA repair"/>
    <property type="evidence" value="ECO:0007669"/>
    <property type="project" value="UniProtKB-UniRule"/>
</dbReference>
<dbReference type="GO" id="GO:0006260">
    <property type="term" value="P:DNA replication"/>
    <property type="evidence" value="ECO:0007669"/>
    <property type="project" value="UniProtKB-UniRule"/>
</dbReference>
<dbReference type="GO" id="GO:0045892">
    <property type="term" value="P:negative regulation of DNA-templated transcription"/>
    <property type="evidence" value="ECO:0007669"/>
    <property type="project" value="UniProtKB-UniRule"/>
</dbReference>
<dbReference type="GO" id="GO:0006508">
    <property type="term" value="P:proteolysis"/>
    <property type="evidence" value="ECO:0007669"/>
    <property type="project" value="InterPro"/>
</dbReference>
<dbReference type="GO" id="GO:0009432">
    <property type="term" value="P:SOS response"/>
    <property type="evidence" value="ECO:0007669"/>
    <property type="project" value="UniProtKB-UniRule"/>
</dbReference>
<dbReference type="CDD" id="cd06529">
    <property type="entry name" value="S24_LexA-like"/>
    <property type="match status" value="1"/>
</dbReference>
<dbReference type="FunFam" id="1.10.10.10:FF:000009">
    <property type="entry name" value="LexA repressor"/>
    <property type="match status" value="1"/>
</dbReference>
<dbReference type="FunFam" id="2.10.109.10:FF:000001">
    <property type="entry name" value="LexA repressor"/>
    <property type="match status" value="1"/>
</dbReference>
<dbReference type="Gene3D" id="2.10.109.10">
    <property type="entry name" value="Umud Fragment, subunit A"/>
    <property type="match status" value="1"/>
</dbReference>
<dbReference type="Gene3D" id="1.10.10.10">
    <property type="entry name" value="Winged helix-like DNA-binding domain superfamily/Winged helix DNA-binding domain"/>
    <property type="match status" value="1"/>
</dbReference>
<dbReference type="HAMAP" id="MF_00015">
    <property type="entry name" value="LexA"/>
    <property type="match status" value="1"/>
</dbReference>
<dbReference type="InterPro" id="IPR006200">
    <property type="entry name" value="LexA"/>
</dbReference>
<dbReference type="InterPro" id="IPR039418">
    <property type="entry name" value="LexA-like"/>
</dbReference>
<dbReference type="InterPro" id="IPR036286">
    <property type="entry name" value="LexA/Signal_pep-like_sf"/>
</dbReference>
<dbReference type="InterPro" id="IPR006199">
    <property type="entry name" value="LexA_DNA-bd_dom"/>
</dbReference>
<dbReference type="InterPro" id="IPR050077">
    <property type="entry name" value="LexA_repressor"/>
</dbReference>
<dbReference type="InterPro" id="IPR006197">
    <property type="entry name" value="Peptidase_S24_LexA"/>
</dbReference>
<dbReference type="InterPro" id="IPR015927">
    <property type="entry name" value="Peptidase_S24_S26A/B/C"/>
</dbReference>
<dbReference type="InterPro" id="IPR036388">
    <property type="entry name" value="WH-like_DNA-bd_sf"/>
</dbReference>
<dbReference type="InterPro" id="IPR036390">
    <property type="entry name" value="WH_DNA-bd_sf"/>
</dbReference>
<dbReference type="NCBIfam" id="TIGR00498">
    <property type="entry name" value="lexA"/>
    <property type="match status" value="1"/>
</dbReference>
<dbReference type="PANTHER" id="PTHR33516">
    <property type="entry name" value="LEXA REPRESSOR"/>
    <property type="match status" value="1"/>
</dbReference>
<dbReference type="PANTHER" id="PTHR33516:SF2">
    <property type="entry name" value="LEXA REPRESSOR-RELATED"/>
    <property type="match status" value="1"/>
</dbReference>
<dbReference type="Pfam" id="PF01726">
    <property type="entry name" value="LexA_DNA_bind"/>
    <property type="match status" value="1"/>
</dbReference>
<dbReference type="Pfam" id="PF00717">
    <property type="entry name" value="Peptidase_S24"/>
    <property type="match status" value="1"/>
</dbReference>
<dbReference type="PRINTS" id="PR00726">
    <property type="entry name" value="LEXASERPTASE"/>
</dbReference>
<dbReference type="SUPFAM" id="SSF51306">
    <property type="entry name" value="LexA/Signal peptidase"/>
    <property type="match status" value="1"/>
</dbReference>
<dbReference type="SUPFAM" id="SSF46785">
    <property type="entry name" value="Winged helix' DNA-binding domain"/>
    <property type="match status" value="1"/>
</dbReference>
<accession>Q1BA08</accession>
<organism>
    <name type="scientific">Mycobacterium sp. (strain MCS)</name>
    <dbReference type="NCBI Taxonomy" id="164756"/>
    <lineage>
        <taxon>Bacteria</taxon>
        <taxon>Bacillati</taxon>
        <taxon>Actinomycetota</taxon>
        <taxon>Actinomycetes</taxon>
        <taxon>Mycobacteriales</taxon>
        <taxon>Mycobacteriaceae</taxon>
        <taxon>Mycobacterium</taxon>
    </lineage>
</organism>
<protein>
    <recommendedName>
        <fullName evidence="1">LexA repressor</fullName>
        <ecNumber evidence="1">3.4.21.88</ecNumber>
    </recommendedName>
</protein>
<proteinExistence type="inferred from homology"/>
<feature type="chain" id="PRO_0000322748" description="LexA repressor">
    <location>
        <begin position="1"/>
        <end position="230"/>
    </location>
</feature>
<feature type="DNA-binding region" description="H-T-H motif" evidence="1">
    <location>
        <begin position="44"/>
        <end position="64"/>
    </location>
</feature>
<feature type="region of interest" description="Disordered" evidence="2">
    <location>
        <begin position="1"/>
        <end position="21"/>
    </location>
</feature>
<feature type="active site" description="For autocatalytic cleavage activity" evidence="1">
    <location>
        <position position="154"/>
    </location>
</feature>
<feature type="active site" description="For autocatalytic cleavage activity" evidence="1">
    <location>
        <position position="191"/>
    </location>
</feature>
<feature type="site" description="Cleavage; by autolysis" evidence="1">
    <location>
        <begin position="119"/>
        <end position="120"/>
    </location>
</feature>
<evidence type="ECO:0000255" key="1">
    <source>
        <dbReference type="HAMAP-Rule" id="MF_00015"/>
    </source>
</evidence>
<evidence type="ECO:0000256" key="2">
    <source>
        <dbReference type="SAM" id="MobiDB-lite"/>
    </source>
</evidence>
<sequence>MSDDSSETRTGGRRGADAGLTERQRTILEVIRASVTSRGYPPSIREIGDAVGLTSTSSVAHQLRTLERKGYLRRDPNRPRAVDVRLSDEPATPVVTTDVAGSDALPEPTFVPVLGRIAAGGPILAEEAVEDVFPLPRELVGEGSLFLLKVVGDSMVDAAICDGDWVVVRQQAVADNGDIVAAMIDGEATVKTFKRSRGQVWLMPHNPAFEPIPGNDAAVLGKVVTVIRKI</sequence>